<proteinExistence type="evidence at protein level"/>
<keyword id="KW-0963">Cytoplasm</keyword>
<keyword id="KW-0507">mRNA processing</keyword>
<keyword id="KW-1185">Reference proteome</keyword>
<keyword id="KW-0687">Ribonucleoprotein</keyword>
<keyword id="KW-0694">RNA-binding</keyword>
<name>LSM1A_ARATH</name>
<evidence type="ECO:0000255" key="1">
    <source>
        <dbReference type="PROSITE-ProRule" id="PRU01346"/>
    </source>
</evidence>
<evidence type="ECO:0000269" key="2">
    <source>
    </source>
</evidence>
<evidence type="ECO:0000269" key="3">
    <source>
    </source>
</evidence>
<evidence type="ECO:0000303" key="4">
    <source>
    </source>
</evidence>
<evidence type="ECO:0000303" key="5">
    <source>
    </source>
</evidence>
<evidence type="ECO:0000305" key="6"/>
<evidence type="ECO:0000312" key="7">
    <source>
        <dbReference type="Araport" id="AT1G19120"/>
    </source>
</evidence>
<evidence type="ECO:0000312" key="8">
    <source>
        <dbReference type="EMBL" id="AAF79296.1"/>
    </source>
</evidence>
<feature type="chain" id="PRO_0000431641" description="Sm-like protein LSM1A">
    <location>
        <begin position="1"/>
        <end position="128"/>
    </location>
</feature>
<feature type="domain" description="Sm" evidence="1">
    <location>
        <begin position="10"/>
        <end position="85"/>
    </location>
</feature>
<feature type="sequence conflict" description="In Ref. 4; AAM61736." evidence="6" ref="4">
    <original>A</original>
    <variation>P</variation>
    <location>
        <position position="17"/>
    </location>
</feature>
<feature type="sequence conflict" description="In Ref. 4; AAM61736." evidence="6" ref="4">
    <original>V</original>
    <variation>L</variation>
    <location>
        <position position="94"/>
    </location>
</feature>
<reference key="1">
    <citation type="journal article" date="2000" name="Nature">
        <title>Sequence and analysis of chromosome 1 of the plant Arabidopsis thaliana.</title>
        <authorList>
            <person name="Theologis A."/>
            <person name="Ecker J.R."/>
            <person name="Palm C.J."/>
            <person name="Federspiel N.A."/>
            <person name="Kaul S."/>
            <person name="White O."/>
            <person name="Alonso J."/>
            <person name="Altafi H."/>
            <person name="Araujo R."/>
            <person name="Bowman C.L."/>
            <person name="Brooks S.Y."/>
            <person name="Buehler E."/>
            <person name="Chan A."/>
            <person name="Chao Q."/>
            <person name="Chen H."/>
            <person name="Cheuk R.F."/>
            <person name="Chin C.W."/>
            <person name="Chung M.K."/>
            <person name="Conn L."/>
            <person name="Conway A.B."/>
            <person name="Conway A.R."/>
            <person name="Creasy T.H."/>
            <person name="Dewar K."/>
            <person name="Dunn P."/>
            <person name="Etgu P."/>
            <person name="Feldblyum T.V."/>
            <person name="Feng J.-D."/>
            <person name="Fong B."/>
            <person name="Fujii C.Y."/>
            <person name="Gill J.E."/>
            <person name="Goldsmith A.D."/>
            <person name="Haas B."/>
            <person name="Hansen N.F."/>
            <person name="Hughes B."/>
            <person name="Huizar L."/>
            <person name="Hunter J.L."/>
            <person name="Jenkins J."/>
            <person name="Johnson-Hopson C."/>
            <person name="Khan S."/>
            <person name="Khaykin E."/>
            <person name="Kim C.J."/>
            <person name="Koo H.L."/>
            <person name="Kremenetskaia I."/>
            <person name="Kurtz D.B."/>
            <person name="Kwan A."/>
            <person name="Lam B."/>
            <person name="Langin-Hooper S."/>
            <person name="Lee A."/>
            <person name="Lee J.M."/>
            <person name="Lenz C.A."/>
            <person name="Li J.H."/>
            <person name="Li Y.-P."/>
            <person name="Lin X."/>
            <person name="Liu S.X."/>
            <person name="Liu Z.A."/>
            <person name="Luros J.S."/>
            <person name="Maiti R."/>
            <person name="Marziali A."/>
            <person name="Militscher J."/>
            <person name="Miranda M."/>
            <person name="Nguyen M."/>
            <person name="Nierman W.C."/>
            <person name="Osborne B.I."/>
            <person name="Pai G."/>
            <person name="Peterson J."/>
            <person name="Pham P.K."/>
            <person name="Rizzo M."/>
            <person name="Rooney T."/>
            <person name="Rowley D."/>
            <person name="Sakano H."/>
            <person name="Salzberg S.L."/>
            <person name="Schwartz J.R."/>
            <person name="Shinn P."/>
            <person name="Southwick A.M."/>
            <person name="Sun H."/>
            <person name="Tallon L.J."/>
            <person name="Tambunga G."/>
            <person name="Toriumi M.J."/>
            <person name="Town C.D."/>
            <person name="Utterback T."/>
            <person name="Van Aken S."/>
            <person name="Vaysberg M."/>
            <person name="Vysotskaia V.S."/>
            <person name="Walker M."/>
            <person name="Wu D."/>
            <person name="Yu G."/>
            <person name="Fraser C.M."/>
            <person name="Venter J.C."/>
            <person name="Davis R.W."/>
        </authorList>
    </citation>
    <scope>NUCLEOTIDE SEQUENCE [LARGE SCALE GENOMIC DNA]</scope>
    <source>
        <strain>cv. Columbia</strain>
    </source>
</reference>
<reference key="2">
    <citation type="journal article" date="2017" name="Plant J.">
        <title>Araport11: a complete reannotation of the Arabidopsis thaliana reference genome.</title>
        <authorList>
            <person name="Cheng C.Y."/>
            <person name="Krishnakumar V."/>
            <person name="Chan A.P."/>
            <person name="Thibaud-Nissen F."/>
            <person name="Schobel S."/>
            <person name="Town C.D."/>
        </authorList>
    </citation>
    <scope>GENOME REANNOTATION</scope>
    <source>
        <strain>cv. Columbia</strain>
    </source>
</reference>
<reference key="3">
    <citation type="journal article" date="2003" name="Science">
        <title>Empirical analysis of transcriptional activity in the Arabidopsis genome.</title>
        <authorList>
            <person name="Yamada K."/>
            <person name="Lim J."/>
            <person name="Dale J.M."/>
            <person name="Chen H."/>
            <person name="Shinn P."/>
            <person name="Palm C.J."/>
            <person name="Southwick A.M."/>
            <person name="Wu H.C."/>
            <person name="Kim C.J."/>
            <person name="Nguyen M."/>
            <person name="Pham P.K."/>
            <person name="Cheuk R.F."/>
            <person name="Karlin-Newmann G."/>
            <person name="Liu S.X."/>
            <person name="Lam B."/>
            <person name="Sakano H."/>
            <person name="Wu T."/>
            <person name="Yu G."/>
            <person name="Miranda M."/>
            <person name="Quach H.L."/>
            <person name="Tripp M."/>
            <person name="Chang C.H."/>
            <person name="Lee J.M."/>
            <person name="Toriumi M.J."/>
            <person name="Chan M.M."/>
            <person name="Tang C.C."/>
            <person name="Onodera C.S."/>
            <person name="Deng J.M."/>
            <person name="Akiyama K."/>
            <person name="Ansari Y."/>
            <person name="Arakawa T."/>
            <person name="Banh J."/>
            <person name="Banno F."/>
            <person name="Bowser L."/>
            <person name="Brooks S.Y."/>
            <person name="Carninci P."/>
            <person name="Chao Q."/>
            <person name="Choy N."/>
            <person name="Enju A."/>
            <person name="Goldsmith A.D."/>
            <person name="Gurjal M."/>
            <person name="Hansen N.F."/>
            <person name="Hayashizaki Y."/>
            <person name="Johnson-Hopson C."/>
            <person name="Hsuan V.W."/>
            <person name="Iida K."/>
            <person name="Karnes M."/>
            <person name="Khan S."/>
            <person name="Koesema E."/>
            <person name="Ishida J."/>
            <person name="Jiang P.X."/>
            <person name="Jones T."/>
            <person name="Kawai J."/>
            <person name="Kamiya A."/>
            <person name="Meyers C."/>
            <person name="Nakajima M."/>
            <person name="Narusaka M."/>
            <person name="Seki M."/>
            <person name="Sakurai T."/>
            <person name="Satou M."/>
            <person name="Tamse R."/>
            <person name="Vaysberg M."/>
            <person name="Wallender E.K."/>
            <person name="Wong C."/>
            <person name="Yamamura Y."/>
            <person name="Yuan S."/>
            <person name="Shinozaki K."/>
            <person name="Davis R.W."/>
            <person name="Theologis A."/>
            <person name="Ecker J.R."/>
        </authorList>
    </citation>
    <scope>NUCLEOTIDE SEQUENCE [LARGE SCALE MRNA]</scope>
    <source>
        <strain>cv. Columbia</strain>
    </source>
</reference>
<reference key="4">
    <citation type="submission" date="2002-03" db="EMBL/GenBank/DDBJ databases">
        <title>Full-length cDNA from Arabidopsis thaliana.</title>
        <authorList>
            <person name="Brover V.V."/>
            <person name="Troukhan M.E."/>
            <person name="Alexandrov N.A."/>
            <person name="Lu Y.-P."/>
            <person name="Flavell R.B."/>
            <person name="Feldmann K.A."/>
        </authorList>
    </citation>
    <scope>NUCLEOTIDE SEQUENCE [LARGE SCALE MRNA]</scope>
</reference>
<reference key="5">
    <citation type="journal article" date="2012" name="Plant Cell">
        <title>LSM proteins provide accurate splicing and decay of selected transcripts to ensure normal Arabidopsis development.</title>
        <authorList>
            <person name="Perea-Resa C."/>
            <person name="Hernandez-Verdeja T."/>
            <person name="Lopez-Cobollo R."/>
            <person name="del Mar Castellano M."/>
            <person name="Salinas J."/>
        </authorList>
    </citation>
    <scope>FUNCTION</scope>
    <scope>SUBUNIT</scope>
    <scope>INTERACTION WITH LSM2 AND LSM4</scope>
    <scope>SUBCELLULAR LOCATION</scope>
    <scope>TISSUE SPECIFICITY</scope>
    <scope>DISRUPTION PHENOTYPE</scope>
    <scope>GENE FAMILY</scope>
</reference>
<reference key="6">
    <citation type="journal article" date="2013" name="Nucleic Acids Res.">
        <title>Arabidopsis thaliana LSM proteins function in mRNA splicing and degradation.</title>
        <authorList>
            <person name="Golisz A."/>
            <person name="Sikorski P.J."/>
            <person name="Kruszka K."/>
            <person name="Kufel J."/>
        </authorList>
    </citation>
    <scope>IDENTIFICATION BY MASS SPECTROMETRY</scope>
    <scope>FUNCTION</scope>
    <scope>SUBUNIT</scope>
    <scope>SUBCELLULAR LOCATION</scope>
    <scope>TISSUE SPECIFICITY</scope>
    <scope>DISRUPTION PHENOTYPE</scope>
</reference>
<accession>Q945P8</accession>
<accession>Q8LEW7</accession>
<accession>Q9LMB5</accession>
<organism>
    <name type="scientific">Arabidopsis thaliana</name>
    <name type="common">Mouse-ear cress</name>
    <dbReference type="NCBI Taxonomy" id="3702"/>
    <lineage>
        <taxon>Eukaryota</taxon>
        <taxon>Viridiplantae</taxon>
        <taxon>Streptophyta</taxon>
        <taxon>Embryophyta</taxon>
        <taxon>Tracheophyta</taxon>
        <taxon>Spermatophyta</taxon>
        <taxon>Magnoliopsida</taxon>
        <taxon>eudicotyledons</taxon>
        <taxon>Gunneridae</taxon>
        <taxon>Pentapetalae</taxon>
        <taxon>rosids</taxon>
        <taxon>malvids</taxon>
        <taxon>Brassicales</taxon>
        <taxon>Brassicaceae</taxon>
        <taxon>Camelineae</taxon>
        <taxon>Arabidopsis</taxon>
    </lineage>
</organism>
<comment type="function">
    <text evidence="2 3">Component of the cytoplasmic LSM1-LSM7 complex which is involved in mRNA degradation by promoting decapping and leading to accurate 5'-3' mRNA decay. LSM1A and LSM1B are essential for the formation of the cytoplasmic LSM1-LSM7 complex which regulates developmental gene expression by the decapping of specific development-related transcripts (PubMed:23221597, PubMed:23620288). Required for P-body formation during heat stress (PubMed:23221597).</text>
</comment>
<comment type="subunit">
    <text evidence="2 3">Component of the heptameric LSM1-LSM7 complex that forms a seven-membered ring structure with a donut shape. The LSM subunits are arranged in the order LSM1, LSM2, LSM3, LSM6, LSM5, LSM7 and LSM4 (PubMed:23221597, PubMed:23620288). LSM1A subunit interacts only with its two neighboring subunits, LSM2 and LSM4 (PubMed:23221597).</text>
</comment>
<comment type="subcellular location">
    <subcellularLocation>
        <location evidence="2 3">Cytoplasm</location>
    </subcellularLocation>
    <subcellularLocation>
        <location evidence="2">Cytoplasm</location>
        <location evidence="2">P-body</location>
    </subcellularLocation>
    <text evidence="2">Translocates from cytosol to P-bodies upon heat stress.</text>
</comment>
<comment type="tissue specificity">
    <text evidence="2 3">Expressed in roots, leaves, stems, flowers and siliques.</text>
</comment>
<comment type="disruption phenotype">
    <text evidence="2 3">No visible phenotype under normal growth conditions, but the double mutants lsm1a and lsm1b show severe developmental alterations, such as delayed seed germination, reduced root length, epinastic, chlorotic and small cotyledons, small and serrated leaves, abnormal venation in cotyledons and leaves, dwarf plants with early flowering, short siliques with reduced seed number and small morphologically alterated seeds.</text>
</comment>
<comment type="similarity">
    <text evidence="6">Belongs to the snRNP Sm proteins family.</text>
</comment>
<comment type="sequence caution" evidence="6">
    <conflict type="erroneous gene model prediction">
        <sequence resource="EMBL-CDS" id="AAF79296"/>
    </conflict>
</comment>
<protein>
    <recommendedName>
        <fullName evidence="6">Sm-like protein LSM1A</fullName>
        <shortName evidence="5">AtLSM1a</shortName>
    </recommendedName>
</protein>
<gene>
    <name evidence="4" type="primary">LSM1A</name>
    <name evidence="7" type="ordered locus">At1g19120</name>
    <name evidence="8" type="ORF">F14D16.28</name>
</gene>
<sequence>MSWAAPDDIFFSTSLAAYLDKKLLVLLRDGRKLMGLLRSFDQFANAVLEEAYERVIVGDLYCDIPLGLYIIRGENVVLIGELDVEKEELPAHMVQVPEAEIKRAQKAEKEEMLLKGTMRKRMEFLDLD</sequence>
<dbReference type="EMBL" id="AC068602">
    <property type="protein sequence ID" value="AAF79296.1"/>
    <property type="status" value="ALT_SEQ"/>
    <property type="molecule type" value="Genomic_DNA"/>
</dbReference>
<dbReference type="EMBL" id="CP002684">
    <property type="protein sequence ID" value="AEE29807.1"/>
    <property type="molecule type" value="Genomic_DNA"/>
</dbReference>
<dbReference type="EMBL" id="AF411792">
    <property type="protein sequence ID" value="AAL06482.1"/>
    <property type="molecule type" value="mRNA"/>
</dbReference>
<dbReference type="EMBL" id="AY094024">
    <property type="protein sequence ID" value="AAM16180.1"/>
    <property type="molecule type" value="mRNA"/>
</dbReference>
<dbReference type="EMBL" id="AY085185">
    <property type="protein sequence ID" value="AAM61736.1"/>
    <property type="molecule type" value="mRNA"/>
</dbReference>
<dbReference type="RefSeq" id="NP_564072.1">
    <property type="nucleotide sequence ID" value="NM_101770.2"/>
</dbReference>
<dbReference type="SMR" id="Q945P8"/>
<dbReference type="ComplexPortal" id="CPX-1308">
    <property type="entry name" value="LSM1-7-PAT1 complex, variant LSM1A-LSM3A-LSM6A-PAT1"/>
</dbReference>
<dbReference type="ComplexPortal" id="CPX-1345">
    <property type="entry name" value="LSM1-7-PAT1 complex, variant LSM1A-LSM3B-LSM6B-PAT1"/>
</dbReference>
<dbReference type="ComplexPortal" id="CPX-1346">
    <property type="entry name" value="LSM1-7-PAT1 complex, variant LSM1A-LSM3B-LSM6A-PAT1"/>
</dbReference>
<dbReference type="ComplexPortal" id="CPX-1351">
    <property type="entry name" value="LSM1-7-PAT1 complex, variant LSM1A-LSM3A-LSM6B-PAT1"/>
</dbReference>
<dbReference type="ComplexPortal" id="CPX-1391">
    <property type="entry name" value="LSM1-7-PAT1 complex, variant LSM1A-LSM3A-LSM6A-PAT1H1"/>
</dbReference>
<dbReference type="ComplexPortal" id="CPX-1392">
    <property type="entry name" value="LSM1-7-PAT1 complex, variant LSM1A-LSM3A-LSM6B-PAT1H1"/>
</dbReference>
<dbReference type="ComplexPortal" id="CPX-1393">
    <property type="entry name" value="LSM1-7-PAT1 complex, variant LSM1A-LSM3B-LSM6A-PAT1H1"/>
</dbReference>
<dbReference type="ComplexPortal" id="CPX-1394">
    <property type="entry name" value="LSM1-7-PAT1 complex, variant LSM1A-LSM3B-LSM6B-PAT1H1"/>
</dbReference>
<dbReference type="ComplexPortal" id="CPX-1399">
    <property type="entry name" value="LSM1-7-PAT1 complex, variant LSM1A-LSM3A-LSM6A-PAT1H2"/>
</dbReference>
<dbReference type="ComplexPortal" id="CPX-1400">
    <property type="entry name" value="LSM1-7-PAT1 complex, variant LSM1A-LSM3A-LSM6B-PAT1H2"/>
</dbReference>
<dbReference type="ComplexPortal" id="CPX-1401">
    <property type="entry name" value="LSM1-7-PAT1 complex, variant LSM1A-LSM3B-LSM6A-PAT1H2"/>
</dbReference>
<dbReference type="ComplexPortal" id="CPX-1402">
    <property type="entry name" value="LSM1-7-PAT1 complex, variant LSM1A-LSM3B-LSM6B-PAT1H2"/>
</dbReference>
<dbReference type="FunCoup" id="Q945P8">
    <property type="interactions" value="3870"/>
</dbReference>
<dbReference type="STRING" id="3702.Q945P8"/>
<dbReference type="PaxDb" id="3702-AT1G19120.1"/>
<dbReference type="ProteomicsDB" id="238680"/>
<dbReference type="EnsemblPlants" id="AT1G19120.1">
    <property type="protein sequence ID" value="AT1G19120.1"/>
    <property type="gene ID" value="AT1G19120"/>
</dbReference>
<dbReference type="GeneID" id="838495"/>
<dbReference type="Gramene" id="AT1G19120.1">
    <property type="protein sequence ID" value="AT1G19120.1"/>
    <property type="gene ID" value="AT1G19120"/>
</dbReference>
<dbReference type="KEGG" id="ath:AT1G19120"/>
<dbReference type="Araport" id="AT1G19120"/>
<dbReference type="TAIR" id="AT1G19120">
    <property type="gene designation" value="LSM1A"/>
</dbReference>
<dbReference type="eggNOG" id="KOG1782">
    <property type="taxonomic scope" value="Eukaryota"/>
</dbReference>
<dbReference type="HOGENOM" id="CLU_076902_0_2_1"/>
<dbReference type="InParanoid" id="Q945P8"/>
<dbReference type="OMA" id="MEDMMIP"/>
<dbReference type="PhylomeDB" id="Q945P8"/>
<dbReference type="PRO" id="PR:Q945P8"/>
<dbReference type="Proteomes" id="UP000006548">
    <property type="component" value="Chromosome 1"/>
</dbReference>
<dbReference type="ExpressionAtlas" id="Q945P8">
    <property type="expression patterns" value="baseline and differential"/>
</dbReference>
<dbReference type="GO" id="GO:1990726">
    <property type="term" value="C:Lsm1-7-Pat1 complex"/>
    <property type="evidence" value="ECO:0000303"/>
    <property type="project" value="ComplexPortal"/>
</dbReference>
<dbReference type="GO" id="GO:0000932">
    <property type="term" value="C:P-body"/>
    <property type="evidence" value="ECO:0000314"/>
    <property type="project" value="TAIR"/>
</dbReference>
<dbReference type="GO" id="GO:1990904">
    <property type="term" value="C:ribonucleoprotein complex"/>
    <property type="evidence" value="ECO:0007669"/>
    <property type="project" value="UniProtKB-KW"/>
</dbReference>
<dbReference type="GO" id="GO:0003723">
    <property type="term" value="F:RNA binding"/>
    <property type="evidence" value="ECO:0000314"/>
    <property type="project" value="TAIR"/>
</dbReference>
<dbReference type="GO" id="GO:0009631">
    <property type="term" value="P:cold acclimation"/>
    <property type="evidence" value="ECO:0000315"/>
    <property type="project" value="TAIR"/>
</dbReference>
<dbReference type="GO" id="GO:0000290">
    <property type="term" value="P:deadenylation-dependent decapping of nuclear-transcribed mRNA"/>
    <property type="evidence" value="ECO:0000269"/>
    <property type="project" value="ComplexPortal"/>
</dbReference>
<dbReference type="GO" id="GO:0042538">
    <property type="term" value="P:hyperosmotic salinity response"/>
    <property type="evidence" value="ECO:0000315"/>
    <property type="project" value="TAIR"/>
</dbReference>
<dbReference type="GO" id="GO:0006397">
    <property type="term" value="P:mRNA processing"/>
    <property type="evidence" value="ECO:0000316"/>
    <property type="project" value="TAIR"/>
</dbReference>
<dbReference type="GO" id="GO:0009414">
    <property type="term" value="P:response to water deprivation"/>
    <property type="evidence" value="ECO:0000315"/>
    <property type="project" value="TAIR"/>
</dbReference>
<dbReference type="GO" id="GO:0016070">
    <property type="term" value="P:RNA metabolic process"/>
    <property type="evidence" value="ECO:0000316"/>
    <property type="project" value="TAIR"/>
</dbReference>
<dbReference type="CDD" id="cd01728">
    <property type="entry name" value="LSm1"/>
    <property type="match status" value="1"/>
</dbReference>
<dbReference type="FunFam" id="2.30.30.100:FF:000029">
    <property type="entry name" value="U6 snRNA-associated Sm-like protein LSm1"/>
    <property type="match status" value="1"/>
</dbReference>
<dbReference type="Gene3D" id="2.30.30.100">
    <property type="match status" value="1"/>
</dbReference>
<dbReference type="InterPro" id="IPR034104">
    <property type="entry name" value="Lsm1"/>
</dbReference>
<dbReference type="InterPro" id="IPR010920">
    <property type="entry name" value="LSM_dom_sf"/>
</dbReference>
<dbReference type="InterPro" id="IPR044642">
    <property type="entry name" value="PTHR15588"/>
</dbReference>
<dbReference type="InterPro" id="IPR047575">
    <property type="entry name" value="Sm"/>
</dbReference>
<dbReference type="InterPro" id="IPR001163">
    <property type="entry name" value="Sm_dom_euk/arc"/>
</dbReference>
<dbReference type="PANTHER" id="PTHR15588">
    <property type="entry name" value="LSM1"/>
    <property type="match status" value="1"/>
</dbReference>
<dbReference type="PANTHER" id="PTHR15588:SF21">
    <property type="entry name" value="SM-LIKE PROTEIN LSM1A"/>
    <property type="match status" value="1"/>
</dbReference>
<dbReference type="Pfam" id="PF01423">
    <property type="entry name" value="LSM"/>
    <property type="match status" value="1"/>
</dbReference>
<dbReference type="SMART" id="SM00651">
    <property type="entry name" value="Sm"/>
    <property type="match status" value="1"/>
</dbReference>
<dbReference type="SUPFAM" id="SSF50182">
    <property type="entry name" value="Sm-like ribonucleoproteins"/>
    <property type="match status" value="1"/>
</dbReference>
<dbReference type="PROSITE" id="PS52002">
    <property type="entry name" value="SM"/>
    <property type="match status" value="1"/>
</dbReference>